<organism>
    <name type="scientific">Lactobacillus acidophilus (strain ATCC 700396 / NCK56 / N2 / NCFM)</name>
    <dbReference type="NCBI Taxonomy" id="272621"/>
    <lineage>
        <taxon>Bacteria</taxon>
        <taxon>Bacillati</taxon>
        <taxon>Bacillota</taxon>
        <taxon>Bacilli</taxon>
        <taxon>Lactobacillales</taxon>
        <taxon>Lactobacillaceae</taxon>
        <taxon>Lactobacillus</taxon>
    </lineage>
</organism>
<proteinExistence type="inferred from homology"/>
<evidence type="ECO:0000255" key="1">
    <source>
        <dbReference type="HAMAP-Rule" id="MF_01588"/>
    </source>
</evidence>
<keyword id="KW-0227">DNA damage</keyword>
<keyword id="KW-0234">DNA repair</keyword>
<keyword id="KW-0235">DNA replication</keyword>
<keyword id="KW-0436">Ligase</keyword>
<keyword id="KW-0460">Magnesium</keyword>
<keyword id="KW-0464">Manganese</keyword>
<keyword id="KW-0479">Metal-binding</keyword>
<keyword id="KW-0520">NAD</keyword>
<keyword id="KW-1185">Reference proteome</keyword>
<keyword id="KW-0862">Zinc</keyword>
<protein>
    <recommendedName>
        <fullName evidence="1">DNA ligase</fullName>
        <ecNumber evidence="1">6.5.1.2</ecNumber>
    </recommendedName>
    <alternativeName>
        <fullName evidence="1">Polydeoxyribonucleotide synthase [NAD(+)]</fullName>
    </alternativeName>
</protein>
<accession>Q5FLL4</accession>
<dbReference type="EC" id="6.5.1.2" evidence="1"/>
<dbReference type="EMBL" id="CP000033">
    <property type="protein sequence ID" value="AAV42410.1"/>
    <property type="molecule type" value="Genomic_DNA"/>
</dbReference>
<dbReference type="RefSeq" id="WP_003546277.1">
    <property type="nucleotide sequence ID" value="NC_006814.3"/>
</dbReference>
<dbReference type="RefSeq" id="YP_193441.1">
    <property type="nucleotide sequence ID" value="NC_006814.3"/>
</dbReference>
<dbReference type="SMR" id="Q5FLL4"/>
<dbReference type="STRING" id="272621.LBA0529"/>
<dbReference type="GeneID" id="93290343"/>
<dbReference type="KEGG" id="lac:LBA0529"/>
<dbReference type="PATRIC" id="fig|272621.13.peg.504"/>
<dbReference type="eggNOG" id="COG0272">
    <property type="taxonomic scope" value="Bacteria"/>
</dbReference>
<dbReference type="HOGENOM" id="CLU_007764_2_1_9"/>
<dbReference type="OrthoDB" id="9759736at2"/>
<dbReference type="BioCyc" id="LACI272621:G1G49-552-MONOMER"/>
<dbReference type="Proteomes" id="UP000006381">
    <property type="component" value="Chromosome"/>
</dbReference>
<dbReference type="GO" id="GO:0005829">
    <property type="term" value="C:cytosol"/>
    <property type="evidence" value="ECO:0007669"/>
    <property type="project" value="TreeGrafter"/>
</dbReference>
<dbReference type="GO" id="GO:0003911">
    <property type="term" value="F:DNA ligase (NAD+) activity"/>
    <property type="evidence" value="ECO:0007669"/>
    <property type="project" value="UniProtKB-UniRule"/>
</dbReference>
<dbReference type="GO" id="GO:0046872">
    <property type="term" value="F:metal ion binding"/>
    <property type="evidence" value="ECO:0007669"/>
    <property type="project" value="UniProtKB-KW"/>
</dbReference>
<dbReference type="GO" id="GO:0006281">
    <property type="term" value="P:DNA repair"/>
    <property type="evidence" value="ECO:0007669"/>
    <property type="project" value="UniProtKB-KW"/>
</dbReference>
<dbReference type="GO" id="GO:0006260">
    <property type="term" value="P:DNA replication"/>
    <property type="evidence" value="ECO:0007669"/>
    <property type="project" value="UniProtKB-KW"/>
</dbReference>
<dbReference type="CDD" id="cd17748">
    <property type="entry name" value="BRCT_DNA_ligase_like"/>
    <property type="match status" value="1"/>
</dbReference>
<dbReference type="CDD" id="cd00114">
    <property type="entry name" value="LIGANc"/>
    <property type="match status" value="1"/>
</dbReference>
<dbReference type="FunFam" id="1.10.150.20:FF:000007">
    <property type="entry name" value="DNA ligase"/>
    <property type="match status" value="1"/>
</dbReference>
<dbReference type="FunFam" id="2.40.50.140:FF:000012">
    <property type="entry name" value="DNA ligase"/>
    <property type="match status" value="1"/>
</dbReference>
<dbReference type="FunFam" id="3.30.470.30:FF:000001">
    <property type="entry name" value="DNA ligase"/>
    <property type="match status" value="1"/>
</dbReference>
<dbReference type="Gene3D" id="6.20.10.30">
    <property type="match status" value="1"/>
</dbReference>
<dbReference type="Gene3D" id="1.10.150.20">
    <property type="entry name" value="5' to 3' exonuclease, C-terminal subdomain"/>
    <property type="match status" value="2"/>
</dbReference>
<dbReference type="Gene3D" id="3.40.50.10190">
    <property type="entry name" value="BRCT domain"/>
    <property type="match status" value="1"/>
</dbReference>
<dbReference type="Gene3D" id="3.30.470.30">
    <property type="entry name" value="DNA ligase/mRNA capping enzyme"/>
    <property type="match status" value="1"/>
</dbReference>
<dbReference type="Gene3D" id="1.10.287.610">
    <property type="entry name" value="Helix hairpin bin"/>
    <property type="match status" value="1"/>
</dbReference>
<dbReference type="Gene3D" id="2.40.50.140">
    <property type="entry name" value="Nucleic acid-binding proteins"/>
    <property type="match status" value="1"/>
</dbReference>
<dbReference type="HAMAP" id="MF_01588">
    <property type="entry name" value="DNA_ligase_A"/>
    <property type="match status" value="1"/>
</dbReference>
<dbReference type="InterPro" id="IPR001357">
    <property type="entry name" value="BRCT_dom"/>
</dbReference>
<dbReference type="InterPro" id="IPR036420">
    <property type="entry name" value="BRCT_dom_sf"/>
</dbReference>
<dbReference type="InterPro" id="IPR041663">
    <property type="entry name" value="DisA/LigA_HHH"/>
</dbReference>
<dbReference type="InterPro" id="IPR001679">
    <property type="entry name" value="DNA_ligase"/>
</dbReference>
<dbReference type="InterPro" id="IPR018239">
    <property type="entry name" value="DNA_ligase_AS"/>
</dbReference>
<dbReference type="InterPro" id="IPR033136">
    <property type="entry name" value="DNA_ligase_CS"/>
</dbReference>
<dbReference type="InterPro" id="IPR013839">
    <property type="entry name" value="DNAligase_adenylation"/>
</dbReference>
<dbReference type="InterPro" id="IPR013840">
    <property type="entry name" value="DNAligase_N"/>
</dbReference>
<dbReference type="InterPro" id="IPR012340">
    <property type="entry name" value="NA-bd_OB-fold"/>
</dbReference>
<dbReference type="InterPro" id="IPR004150">
    <property type="entry name" value="NAD_DNA_ligase_OB"/>
</dbReference>
<dbReference type="InterPro" id="IPR010994">
    <property type="entry name" value="RuvA_2-like"/>
</dbReference>
<dbReference type="InterPro" id="IPR004149">
    <property type="entry name" value="Znf_DNAligase_C4"/>
</dbReference>
<dbReference type="NCBIfam" id="TIGR00575">
    <property type="entry name" value="dnlj"/>
    <property type="match status" value="1"/>
</dbReference>
<dbReference type="NCBIfam" id="NF005932">
    <property type="entry name" value="PRK07956.1"/>
    <property type="match status" value="1"/>
</dbReference>
<dbReference type="PANTHER" id="PTHR23389">
    <property type="entry name" value="CHROMOSOME TRANSMISSION FIDELITY FACTOR 18"/>
    <property type="match status" value="1"/>
</dbReference>
<dbReference type="PANTHER" id="PTHR23389:SF9">
    <property type="entry name" value="DNA LIGASE"/>
    <property type="match status" value="1"/>
</dbReference>
<dbReference type="Pfam" id="PF00533">
    <property type="entry name" value="BRCT"/>
    <property type="match status" value="1"/>
</dbReference>
<dbReference type="Pfam" id="PF01653">
    <property type="entry name" value="DNA_ligase_aden"/>
    <property type="match status" value="1"/>
</dbReference>
<dbReference type="Pfam" id="PF03120">
    <property type="entry name" value="DNA_ligase_OB"/>
    <property type="match status" value="1"/>
</dbReference>
<dbReference type="Pfam" id="PF03119">
    <property type="entry name" value="DNA_ligase_ZBD"/>
    <property type="match status" value="1"/>
</dbReference>
<dbReference type="Pfam" id="PF12826">
    <property type="entry name" value="HHH_2"/>
    <property type="match status" value="1"/>
</dbReference>
<dbReference type="Pfam" id="PF14520">
    <property type="entry name" value="HHH_5"/>
    <property type="match status" value="1"/>
</dbReference>
<dbReference type="PIRSF" id="PIRSF001604">
    <property type="entry name" value="LigA"/>
    <property type="match status" value="1"/>
</dbReference>
<dbReference type="SMART" id="SM00292">
    <property type="entry name" value="BRCT"/>
    <property type="match status" value="1"/>
</dbReference>
<dbReference type="SMART" id="SM00532">
    <property type="entry name" value="LIGANc"/>
    <property type="match status" value="1"/>
</dbReference>
<dbReference type="SUPFAM" id="SSF52113">
    <property type="entry name" value="BRCT domain"/>
    <property type="match status" value="1"/>
</dbReference>
<dbReference type="SUPFAM" id="SSF56091">
    <property type="entry name" value="DNA ligase/mRNA capping enzyme, catalytic domain"/>
    <property type="match status" value="1"/>
</dbReference>
<dbReference type="SUPFAM" id="SSF50249">
    <property type="entry name" value="Nucleic acid-binding proteins"/>
    <property type="match status" value="1"/>
</dbReference>
<dbReference type="SUPFAM" id="SSF47781">
    <property type="entry name" value="RuvA domain 2-like"/>
    <property type="match status" value="1"/>
</dbReference>
<dbReference type="PROSITE" id="PS50172">
    <property type="entry name" value="BRCT"/>
    <property type="match status" value="1"/>
</dbReference>
<dbReference type="PROSITE" id="PS01055">
    <property type="entry name" value="DNA_LIGASE_N1"/>
    <property type="match status" value="1"/>
</dbReference>
<dbReference type="PROSITE" id="PS01056">
    <property type="entry name" value="DNA_LIGASE_N2"/>
    <property type="match status" value="1"/>
</dbReference>
<comment type="function">
    <text evidence="1">DNA ligase that catalyzes the formation of phosphodiester linkages between 5'-phosphoryl and 3'-hydroxyl groups in double-stranded DNA using NAD as a coenzyme and as the energy source for the reaction. It is essential for DNA replication and repair of damaged DNA.</text>
</comment>
<comment type="catalytic activity">
    <reaction evidence="1">
        <text>NAD(+) + (deoxyribonucleotide)n-3'-hydroxyl + 5'-phospho-(deoxyribonucleotide)m = (deoxyribonucleotide)n+m + AMP + beta-nicotinamide D-nucleotide.</text>
        <dbReference type="EC" id="6.5.1.2"/>
    </reaction>
</comment>
<comment type="cofactor">
    <cofactor evidence="1">
        <name>Mg(2+)</name>
        <dbReference type="ChEBI" id="CHEBI:18420"/>
    </cofactor>
    <cofactor evidence="1">
        <name>Mn(2+)</name>
        <dbReference type="ChEBI" id="CHEBI:29035"/>
    </cofactor>
</comment>
<comment type="similarity">
    <text evidence="1">Belongs to the NAD-dependent DNA ligase family. LigA subfamily.</text>
</comment>
<feature type="chain" id="PRO_0000313271" description="DNA ligase">
    <location>
        <begin position="1"/>
        <end position="668"/>
    </location>
</feature>
<feature type="domain" description="BRCT" evidence="1">
    <location>
        <begin position="591"/>
        <end position="668"/>
    </location>
</feature>
<feature type="active site" description="N6-AMP-lysine intermediate" evidence="1">
    <location>
        <position position="118"/>
    </location>
</feature>
<feature type="binding site" evidence="1">
    <location>
        <begin position="37"/>
        <end position="41"/>
    </location>
    <ligand>
        <name>NAD(+)</name>
        <dbReference type="ChEBI" id="CHEBI:57540"/>
    </ligand>
</feature>
<feature type="binding site" evidence="1">
    <location>
        <begin position="86"/>
        <end position="87"/>
    </location>
    <ligand>
        <name>NAD(+)</name>
        <dbReference type="ChEBI" id="CHEBI:57540"/>
    </ligand>
</feature>
<feature type="binding site" evidence="1">
    <location>
        <position position="116"/>
    </location>
    <ligand>
        <name>NAD(+)</name>
        <dbReference type="ChEBI" id="CHEBI:57540"/>
    </ligand>
</feature>
<feature type="binding site" evidence="1">
    <location>
        <position position="139"/>
    </location>
    <ligand>
        <name>NAD(+)</name>
        <dbReference type="ChEBI" id="CHEBI:57540"/>
    </ligand>
</feature>
<feature type="binding site" evidence="1">
    <location>
        <position position="173"/>
    </location>
    <ligand>
        <name>NAD(+)</name>
        <dbReference type="ChEBI" id="CHEBI:57540"/>
    </ligand>
</feature>
<feature type="binding site" evidence="1">
    <location>
        <position position="288"/>
    </location>
    <ligand>
        <name>NAD(+)</name>
        <dbReference type="ChEBI" id="CHEBI:57540"/>
    </ligand>
</feature>
<feature type="binding site" evidence="1">
    <location>
        <position position="312"/>
    </location>
    <ligand>
        <name>NAD(+)</name>
        <dbReference type="ChEBI" id="CHEBI:57540"/>
    </ligand>
</feature>
<feature type="binding site" evidence="1">
    <location>
        <position position="406"/>
    </location>
    <ligand>
        <name>Zn(2+)</name>
        <dbReference type="ChEBI" id="CHEBI:29105"/>
    </ligand>
</feature>
<feature type="binding site" evidence="1">
    <location>
        <position position="409"/>
    </location>
    <ligand>
        <name>Zn(2+)</name>
        <dbReference type="ChEBI" id="CHEBI:29105"/>
    </ligand>
</feature>
<feature type="binding site" evidence="1">
    <location>
        <position position="424"/>
    </location>
    <ligand>
        <name>Zn(2+)</name>
        <dbReference type="ChEBI" id="CHEBI:29105"/>
    </ligand>
</feature>
<feature type="binding site" evidence="1">
    <location>
        <position position="429"/>
    </location>
    <ligand>
        <name>Zn(2+)</name>
        <dbReference type="ChEBI" id="CHEBI:29105"/>
    </ligand>
</feature>
<reference key="1">
    <citation type="journal article" date="2005" name="Proc. Natl. Acad. Sci. U.S.A.">
        <title>Complete genome sequence of the probiotic lactic acid bacterium Lactobacillus acidophilus NCFM.</title>
        <authorList>
            <person name="Altermann E."/>
            <person name="Russell W.M."/>
            <person name="Azcarate-Peril M.A."/>
            <person name="Barrangou R."/>
            <person name="Buck B.L."/>
            <person name="McAuliffe O."/>
            <person name="Souther N."/>
            <person name="Dobson A."/>
            <person name="Duong T."/>
            <person name="Callanan M."/>
            <person name="Lick S."/>
            <person name="Hamrick A."/>
            <person name="Cano R."/>
            <person name="Klaenhammer T.R."/>
        </authorList>
    </citation>
    <scope>NUCLEOTIDE SEQUENCE [LARGE SCALE GENOMIC DNA]</scope>
    <source>
        <strain>ATCC 700396 / NCK56 / N2 / NCFM</strain>
    </source>
</reference>
<name>DNLJ_LACAC</name>
<sequence>MADITLDEAKKEASLLRNQLDKWADAYYSKDAPEVEDNVYDQKYSRLLELEKQFPEIVTPDSITQRVGGEIDSDFTKVEHAIPMLSMGDVFSKDELKDFDQRMQKLVGHPVEYNVELKIDGLSLSLEYENGKLMRASTRGNGYVGEDVTANARYIADIPQTLPEPLTIEVRGECYMGKEAFAKLNEERENEGLSVFANPRNAAAGSLRQLDPKVTKKRQLSTFIYTWVNPPEDITSQHEAIKRMQELGFHTNETGQKLASLEEIFAFIDEYTARRDSLAYGIDGIVLKIDDLNIERSLGNTVKVPRWEIAYKFPPEEQETIVRDIVWTVGRTGVVTPTAVMDPVQLAGTTVARASLHNPDYLNEKDVRLGDTVKLHKAGDIIPEISEVVLSKRPVDSVPYVIPENCPSCGHKLVHLQDEVALRCINPSCPAQVEEGITHFASRPAMNIAGLGPKIVKQLIANDLVHNVADLYHLSAEDLAQLDHFKEKSINNLLTAIDNSKKNSVELLITGLGIDHVGAKAARLIAQKFKNLAKIMSLGVQDLASIDTIGMTIAESMTTYFAQPEAQEMIADLEKSGLNMEYLGEDEPEDIPDNPFKDKTVVLTGKLEHYTRSEFTKRLQALGAKVTGSVSKKTNYVIYGQDAGSKYNKAEQLGIPLLTEEEAIAQIK</sequence>
<gene>
    <name evidence="1" type="primary">ligA</name>
    <name type="ordered locus">LBA0529</name>
</gene>